<protein>
    <recommendedName>
        <fullName>Nuclear protein MDM1</fullName>
    </recommendedName>
</protein>
<proteinExistence type="evidence at transcript level"/>
<name>MDM1_PONAB</name>
<accession>Q5RC32</accession>
<comment type="function">
    <text evidence="1">Microtubule-binding protein that negatively regulates centriole duplication. Binds to and stabilizes microtubules.</text>
</comment>
<comment type="subcellular location">
    <subcellularLocation>
        <location evidence="1">Nucleus</location>
    </subcellularLocation>
    <subcellularLocation>
        <location evidence="1">Cytoplasm</location>
        <location evidence="1">Cytoskeleton</location>
        <location evidence="1">Microtubule organizing center</location>
        <location evidence="1">Centrosome</location>
    </subcellularLocation>
    <subcellularLocation>
        <location evidence="1">Cytoplasm</location>
        <location evidence="1">Cytoskeleton</location>
        <location evidence="1">Microtubule organizing center</location>
        <location evidence="1">Centrosome</location>
        <location evidence="1">Centriole</location>
    </subcellularLocation>
    <text evidence="1">Localizes to the centriole lumen.</text>
</comment>
<comment type="similarity">
    <text evidence="5">Belongs to the MDM1 family.</text>
</comment>
<comment type="sequence caution" evidence="5">
    <conflict type="erroneous initiation">
        <sequence resource="EMBL-CDS" id="CAH90678"/>
    </conflict>
</comment>
<reference key="1">
    <citation type="submission" date="2004-11" db="EMBL/GenBank/DDBJ databases">
        <authorList>
            <consortium name="The German cDNA consortium"/>
        </authorList>
    </citation>
    <scope>NUCLEOTIDE SEQUENCE [LARGE SCALE MRNA]</scope>
    <source>
        <tissue>Kidney</tissue>
    </source>
</reference>
<sequence length="724" mass="81888">MPVRFKGLSEYQRNFLWKKSYLSESCNSSVGRKYPWAGLRSDQLGITKEPSFISKRRVPYHDPQISKSLEWNGAISESNVVASPEPEAPETPKSQEAEQKDVTQERVHSLEASRVPKRTRSHSADSRAEGASDVENNEGVTNHTPVNENVELEHSTKVLSENVDNGLDRLLRKKAGLTVVPSYNALRNSEYQRQFVWKTSKETAPAFSANQVFHNKSQFVPPFKGNSIIHETEYKRNFKGLSPVKEPKLRNDLRENRNLETVSPEKKSNKIDDPLKLEAEMELKDLHQPKKKLAPWKHQRLGKVNSEYRAKFLSPAQYLYKAGAWTRVKGNMPNQGSLNAMWYAEVKELREKAEFYRKRVQGTHFSRDHLNQILSDSNCCWDVSSTTSSEGTISSNIRALDLAGDPTSHKTLQKCPSTEPEEKGNIVEEQPQKNTTEKLGVSAPTIPVRRRLAWDTENTSEDVQKQPREKEEEDDDEEEGDRKTGKQAVRGEQEKLDVHEKSKADKMKEGSDSSVSSEKGGRLPTPKLRELGGIQRTHHDLTTPAVGGAVLVSPSKMKPPAPEQRKRMTSQDCLETSKNDFTKKESHAVSLLTSPAAGIKTVDPLPLREDSEDNIPKFAEATLPVSKIPEYPTNPPGQSPSPPHVPSYWYPSRRIQGSLRDPEFQHNVRKARMNNLRLPQHEAFNDEDEDRLSEISARSAASSLRAFQTLARAKKRKENFWGIT</sequence>
<keyword id="KW-0175">Coiled coil</keyword>
<keyword id="KW-0963">Cytoplasm</keyword>
<keyword id="KW-0206">Cytoskeleton</keyword>
<keyword id="KW-0493">Microtubule</keyword>
<keyword id="KW-0539">Nucleus</keyword>
<keyword id="KW-0597">Phosphoprotein</keyword>
<keyword id="KW-1185">Reference proteome</keyword>
<keyword id="KW-0677">Repeat</keyword>
<gene>
    <name type="primary">MDM1</name>
</gene>
<feature type="chain" id="PRO_0000299061" description="Nuclear protein MDM1">
    <location>
        <begin position="1"/>
        <end position="724"/>
    </location>
</feature>
<feature type="region of interest" description="Disordered" evidence="4">
    <location>
        <begin position="79"/>
        <end position="152"/>
    </location>
</feature>
<feature type="region of interest" description="Disordered" evidence="4">
    <location>
        <begin position="401"/>
        <end position="573"/>
    </location>
</feature>
<feature type="region of interest" description="Disordered" evidence="4">
    <location>
        <begin position="626"/>
        <end position="647"/>
    </location>
</feature>
<feature type="coiled-coil region" evidence="3">
    <location>
        <begin position="340"/>
        <end position="364"/>
    </location>
</feature>
<feature type="short sequence motif" description="ST]-E-Y-X(3)-F motif 1; required for efficient microtubule binding and stabilization" evidence="1">
    <location>
        <begin position="9"/>
        <end position="15"/>
    </location>
</feature>
<feature type="short sequence motif" description="ST]-E-Y-X(3)-F motif 2; required for efficient microtubule binding and stabilization" evidence="1">
    <location>
        <begin position="189"/>
        <end position="195"/>
    </location>
</feature>
<feature type="short sequence motif" description="ST]-E-Y-X(3)-F motif 3; required for efficient microtubule binding" evidence="1">
    <location>
        <begin position="232"/>
        <end position="238"/>
    </location>
</feature>
<feature type="short sequence motif" description="ST]-E-Y-X(3)-F motif 4; required for efficient microtubule binding and stabilization" evidence="1">
    <location>
        <begin position="306"/>
        <end position="312"/>
    </location>
</feature>
<feature type="compositionally biased region" description="Basic and acidic residues" evidence="4">
    <location>
        <begin position="93"/>
        <end position="111"/>
    </location>
</feature>
<feature type="compositionally biased region" description="Polar residues" evidence="4">
    <location>
        <begin position="138"/>
        <end position="147"/>
    </location>
</feature>
<feature type="compositionally biased region" description="Basic and acidic residues" evidence="4">
    <location>
        <begin position="480"/>
        <end position="511"/>
    </location>
</feature>
<feature type="compositionally biased region" description="Pro residues" evidence="4">
    <location>
        <begin position="632"/>
        <end position="645"/>
    </location>
</feature>
<feature type="modified residue" description="Phosphoserine" evidence="1">
    <location>
        <position position="83"/>
    </location>
</feature>
<feature type="modified residue" description="Phosphoserine" evidence="2">
    <location>
        <position position="123"/>
    </location>
</feature>
<feature type="modified residue" description="Phosphoserine" evidence="2">
    <location>
        <position position="126"/>
    </location>
</feature>
<feature type="modified residue" description="Phosphoserine" evidence="1">
    <location>
        <position position="242"/>
    </location>
</feature>
<feature type="modified residue" description="Phosphoserine" evidence="1">
    <location>
        <position position="263"/>
    </location>
</feature>
<feature type="modified residue" description="Phosphoserine" evidence="2">
    <location>
        <position position="314"/>
    </location>
</feature>
<feature type="modified residue" description="Phosphoserine" evidence="2">
    <location>
        <position position="570"/>
    </location>
</feature>
<feature type="modified residue" description="Phosphoserine" evidence="1">
    <location>
        <position position="594"/>
    </location>
</feature>
<feature type="modified residue" description="Phosphoserine" evidence="1">
    <location>
        <position position="658"/>
    </location>
</feature>
<organism>
    <name type="scientific">Pongo abelii</name>
    <name type="common">Sumatran orangutan</name>
    <name type="synonym">Pongo pygmaeus abelii</name>
    <dbReference type="NCBI Taxonomy" id="9601"/>
    <lineage>
        <taxon>Eukaryota</taxon>
        <taxon>Metazoa</taxon>
        <taxon>Chordata</taxon>
        <taxon>Craniata</taxon>
        <taxon>Vertebrata</taxon>
        <taxon>Euteleostomi</taxon>
        <taxon>Mammalia</taxon>
        <taxon>Eutheria</taxon>
        <taxon>Euarchontoglires</taxon>
        <taxon>Primates</taxon>
        <taxon>Haplorrhini</taxon>
        <taxon>Catarrhini</taxon>
        <taxon>Hominidae</taxon>
        <taxon>Pongo</taxon>
    </lineage>
</organism>
<dbReference type="EMBL" id="CR858450">
    <property type="protein sequence ID" value="CAH90678.1"/>
    <property type="status" value="ALT_INIT"/>
    <property type="molecule type" value="mRNA"/>
</dbReference>
<dbReference type="RefSeq" id="NP_001125370.1">
    <property type="nucleotide sequence ID" value="NM_001131898.2"/>
</dbReference>
<dbReference type="RefSeq" id="XP_009246276.1">
    <property type="nucleotide sequence ID" value="XM_009248001.1"/>
</dbReference>
<dbReference type="FunCoup" id="Q5RC32">
    <property type="interactions" value="2419"/>
</dbReference>
<dbReference type="STRING" id="9601.ENSPPYP00000005410"/>
<dbReference type="GeneID" id="100172273"/>
<dbReference type="KEGG" id="pon:100172273"/>
<dbReference type="CTD" id="56890"/>
<dbReference type="eggNOG" id="ENOG502QVRV">
    <property type="taxonomic scope" value="Eukaryota"/>
</dbReference>
<dbReference type="HOGENOM" id="CLU_023835_0_0_1"/>
<dbReference type="InParanoid" id="Q5RC32"/>
<dbReference type="OrthoDB" id="9999940at2759"/>
<dbReference type="Proteomes" id="UP000001595">
    <property type="component" value="Unplaced"/>
</dbReference>
<dbReference type="GO" id="GO:0005814">
    <property type="term" value="C:centriole"/>
    <property type="evidence" value="ECO:0000250"/>
    <property type="project" value="UniProtKB"/>
</dbReference>
<dbReference type="GO" id="GO:0005813">
    <property type="term" value="C:centrosome"/>
    <property type="evidence" value="ECO:0000250"/>
    <property type="project" value="UniProtKB"/>
</dbReference>
<dbReference type="GO" id="GO:0005737">
    <property type="term" value="C:cytoplasm"/>
    <property type="evidence" value="ECO:0007669"/>
    <property type="project" value="UniProtKB-KW"/>
</dbReference>
<dbReference type="GO" id="GO:0005874">
    <property type="term" value="C:microtubule"/>
    <property type="evidence" value="ECO:0007669"/>
    <property type="project" value="UniProtKB-KW"/>
</dbReference>
<dbReference type="GO" id="GO:0005634">
    <property type="term" value="C:nucleus"/>
    <property type="evidence" value="ECO:0000250"/>
    <property type="project" value="UniProtKB"/>
</dbReference>
<dbReference type="GO" id="GO:0008017">
    <property type="term" value="F:microtubule binding"/>
    <property type="evidence" value="ECO:0000250"/>
    <property type="project" value="UniProtKB"/>
</dbReference>
<dbReference type="GO" id="GO:0046600">
    <property type="term" value="P:negative regulation of centriole replication"/>
    <property type="evidence" value="ECO:0000250"/>
    <property type="project" value="UniProtKB"/>
</dbReference>
<dbReference type="GO" id="GO:0060041">
    <property type="term" value="P:retina development in camera-type eye"/>
    <property type="evidence" value="ECO:0007669"/>
    <property type="project" value="TreeGrafter"/>
</dbReference>
<dbReference type="InterPro" id="IPR029136">
    <property type="entry name" value="MDM1"/>
</dbReference>
<dbReference type="PANTHER" id="PTHR32078">
    <property type="entry name" value="NUCLEAR PROTEIN MDM1"/>
    <property type="match status" value="1"/>
</dbReference>
<dbReference type="PANTHER" id="PTHR32078:SF1">
    <property type="entry name" value="NUCLEAR PROTEIN MDM1"/>
    <property type="match status" value="1"/>
</dbReference>
<dbReference type="Pfam" id="PF15501">
    <property type="entry name" value="MDM1"/>
    <property type="match status" value="1"/>
</dbReference>
<evidence type="ECO:0000250" key="1">
    <source>
        <dbReference type="UniProtKB" id="Q8TC05"/>
    </source>
</evidence>
<evidence type="ECO:0000250" key="2">
    <source>
        <dbReference type="UniProtKB" id="Q9D067"/>
    </source>
</evidence>
<evidence type="ECO:0000255" key="3"/>
<evidence type="ECO:0000256" key="4">
    <source>
        <dbReference type="SAM" id="MobiDB-lite"/>
    </source>
</evidence>
<evidence type="ECO:0000305" key="5"/>